<name>YJIM_ECOLI</name>
<feature type="chain" id="PRO_0000169792" description="Putative dehydratase subunit YjiM">
    <location>
        <begin position="1"/>
        <end position="383"/>
    </location>
</feature>
<gene>
    <name type="primary">yjiM</name>
    <name type="ordered locus">b4335</name>
    <name type="ordered locus">JW5786</name>
</gene>
<sequence>MSLVTDLPAIFDQFSEARQTGFLTVMDLKERGIPLVGTYCTFMPQEIPMAAGAVVVSLCSTSDETIEEAEKDLPRNLCPLIKSSYGFGKTDKCPYFYFSDLVVGETTCDGKKKMYEYMAEFKPVHVMQLPNSVKDDASRALWKAEMLRLQKTVEERFGHEISEDALRDAIALKNRERRALANFYHLGQLNPPALSGSDILKVVYGATFRFDKEALINELDAMTARVRQQWEEGQRLDPRPRILITGCPIGGAAEKVVRAIEENGGWVVGYENCTGAKATEQCVAETGDVYDALADKYLAIGCSCVSPNDQRLKMLSQMVEEYQVDGVVDVILQACHTYAVESLAIKRHVRQQHNIPYIAIETDYSTSDVGQLSTRVAAFIEML</sequence>
<proteinExistence type="inferred from homology"/>
<organism>
    <name type="scientific">Escherichia coli (strain K12)</name>
    <dbReference type="NCBI Taxonomy" id="83333"/>
    <lineage>
        <taxon>Bacteria</taxon>
        <taxon>Pseudomonadati</taxon>
        <taxon>Pseudomonadota</taxon>
        <taxon>Gammaproteobacteria</taxon>
        <taxon>Enterobacterales</taxon>
        <taxon>Enterobacteriaceae</taxon>
        <taxon>Escherichia</taxon>
    </lineage>
</organism>
<dbReference type="EC" id="4.-.-.-"/>
<dbReference type="EMBL" id="U14003">
    <property type="protein sequence ID" value="AAA97231.1"/>
    <property type="status" value="ALT_INIT"/>
    <property type="molecule type" value="Genomic_DNA"/>
</dbReference>
<dbReference type="EMBL" id="U00096">
    <property type="protein sequence ID" value="AAC77291.2"/>
    <property type="molecule type" value="Genomic_DNA"/>
</dbReference>
<dbReference type="EMBL" id="AP009048">
    <property type="protein sequence ID" value="BAE78328.1"/>
    <property type="molecule type" value="Genomic_DNA"/>
</dbReference>
<dbReference type="PIR" id="S56560">
    <property type="entry name" value="S56560"/>
</dbReference>
<dbReference type="RefSeq" id="NP_418755.4">
    <property type="nucleotide sequence ID" value="NC_000913.3"/>
</dbReference>
<dbReference type="RefSeq" id="WP_001300012.1">
    <property type="nucleotide sequence ID" value="NZ_LN832404.1"/>
</dbReference>
<dbReference type="SMR" id="P39384"/>
<dbReference type="BioGRID" id="4262757">
    <property type="interactions" value="14"/>
</dbReference>
<dbReference type="BioGRID" id="850156">
    <property type="interactions" value="1"/>
</dbReference>
<dbReference type="DIP" id="DIP-12639N"/>
<dbReference type="FunCoup" id="P39384">
    <property type="interactions" value="4"/>
</dbReference>
<dbReference type="IntAct" id="P39384">
    <property type="interactions" value="1"/>
</dbReference>
<dbReference type="STRING" id="511145.b4335"/>
<dbReference type="jPOST" id="P39384"/>
<dbReference type="PaxDb" id="511145-b4335"/>
<dbReference type="EnsemblBacteria" id="AAC77291">
    <property type="protein sequence ID" value="AAC77291"/>
    <property type="gene ID" value="b4335"/>
</dbReference>
<dbReference type="GeneID" id="945789"/>
<dbReference type="KEGG" id="ecj:JW5786"/>
<dbReference type="KEGG" id="eco:b4335"/>
<dbReference type="KEGG" id="ecoc:C3026_23435"/>
<dbReference type="PATRIC" id="fig|1411691.4.peg.2352"/>
<dbReference type="EchoBASE" id="EB2462"/>
<dbReference type="eggNOG" id="COG1775">
    <property type="taxonomic scope" value="Bacteria"/>
</dbReference>
<dbReference type="HOGENOM" id="CLU_053697_1_1_6"/>
<dbReference type="InParanoid" id="P39384"/>
<dbReference type="OMA" id="LQFCQPY"/>
<dbReference type="OrthoDB" id="9810278at2"/>
<dbReference type="PhylomeDB" id="P39384"/>
<dbReference type="BioCyc" id="EcoCyc:G7932-MONOMER"/>
<dbReference type="PRO" id="PR:P39384"/>
<dbReference type="Proteomes" id="UP000000625">
    <property type="component" value="Chromosome"/>
</dbReference>
<dbReference type="GO" id="GO:0016829">
    <property type="term" value="F:lyase activity"/>
    <property type="evidence" value="ECO:0007669"/>
    <property type="project" value="UniProtKB-KW"/>
</dbReference>
<dbReference type="GO" id="GO:0006974">
    <property type="term" value="P:DNA damage response"/>
    <property type="evidence" value="ECO:0000270"/>
    <property type="project" value="EcoliWiki"/>
</dbReference>
<dbReference type="FunFam" id="3.40.50.11890:FF:000001">
    <property type="entry name" value="Putative 2-hydroxyglutaryl-CoA dehydratase, D-component"/>
    <property type="match status" value="1"/>
</dbReference>
<dbReference type="FunFam" id="3.40.50.11900:FF:000001">
    <property type="entry name" value="Putative 2-hydroxyglutaryl-CoA dehydratase, D-component"/>
    <property type="match status" value="1"/>
</dbReference>
<dbReference type="Gene3D" id="1.20.1270.370">
    <property type="match status" value="1"/>
</dbReference>
<dbReference type="Gene3D" id="3.40.50.11890">
    <property type="match status" value="1"/>
</dbReference>
<dbReference type="Gene3D" id="3.40.50.11900">
    <property type="match status" value="1"/>
</dbReference>
<dbReference type="InterPro" id="IPR010327">
    <property type="entry name" value="FldB/FldC_alpha/beta"/>
</dbReference>
<dbReference type="InterPro" id="IPR047678">
    <property type="entry name" value="YjiM-like"/>
</dbReference>
<dbReference type="NCBIfam" id="NF040772">
    <property type="entry name" value="double_cubane"/>
    <property type="match status" value="1"/>
</dbReference>
<dbReference type="PANTHER" id="PTHR30548">
    <property type="entry name" value="2-HYDROXYGLUTARYL-COA DEHYDRATASE, D-COMPONENT-RELATED"/>
    <property type="match status" value="1"/>
</dbReference>
<dbReference type="PANTHER" id="PTHR30548:SF6">
    <property type="entry name" value="DEHYDRATASE SUBUNIT YJIM-RELATED"/>
    <property type="match status" value="1"/>
</dbReference>
<dbReference type="Pfam" id="PF06050">
    <property type="entry name" value="HGD-D"/>
    <property type="match status" value="1"/>
</dbReference>
<keyword id="KW-0456">Lyase</keyword>
<keyword id="KW-1185">Reference proteome</keyword>
<reference key="1">
    <citation type="journal article" date="1995" name="Nucleic Acids Res.">
        <title>Analysis of the Escherichia coli genome VI: DNA sequence of the region from 92.8 through 100 minutes.</title>
        <authorList>
            <person name="Burland V.D."/>
            <person name="Plunkett G. III"/>
            <person name="Sofia H.J."/>
            <person name="Daniels D.L."/>
            <person name="Blattner F.R."/>
        </authorList>
    </citation>
    <scope>NUCLEOTIDE SEQUENCE [LARGE SCALE GENOMIC DNA]</scope>
    <source>
        <strain>K12 / MG1655 / ATCC 47076</strain>
    </source>
</reference>
<reference key="2">
    <citation type="journal article" date="1997" name="Science">
        <title>The complete genome sequence of Escherichia coli K-12.</title>
        <authorList>
            <person name="Blattner F.R."/>
            <person name="Plunkett G. III"/>
            <person name="Bloch C.A."/>
            <person name="Perna N.T."/>
            <person name="Burland V."/>
            <person name="Riley M."/>
            <person name="Collado-Vides J."/>
            <person name="Glasner J.D."/>
            <person name="Rode C.K."/>
            <person name="Mayhew G.F."/>
            <person name="Gregor J."/>
            <person name="Davis N.W."/>
            <person name="Kirkpatrick H.A."/>
            <person name="Goeden M.A."/>
            <person name="Rose D.J."/>
            <person name="Mau B."/>
            <person name="Shao Y."/>
        </authorList>
    </citation>
    <scope>NUCLEOTIDE SEQUENCE [LARGE SCALE GENOMIC DNA]</scope>
    <source>
        <strain>K12 / MG1655 / ATCC 47076</strain>
    </source>
</reference>
<reference key="3">
    <citation type="journal article" date="2006" name="Mol. Syst. Biol.">
        <title>Highly accurate genome sequences of Escherichia coli K-12 strains MG1655 and W3110.</title>
        <authorList>
            <person name="Hayashi K."/>
            <person name="Morooka N."/>
            <person name="Yamamoto Y."/>
            <person name="Fujita K."/>
            <person name="Isono K."/>
            <person name="Choi S."/>
            <person name="Ohtsubo E."/>
            <person name="Baba T."/>
            <person name="Wanner B.L."/>
            <person name="Mori H."/>
            <person name="Horiuchi T."/>
        </authorList>
    </citation>
    <scope>NUCLEOTIDE SEQUENCE [LARGE SCALE GENOMIC DNA]</scope>
    <source>
        <strain>K12 / W3110 / ATCC 27325 / DSM 5911</strain>
    </source>
</reference>
<evidence type="ECO:0000305" key="1"/>
<accession>P39384</accession>
<accession>Q2M5X8</accession>
<comment type="similarity">
    <text evidence="1">Belongs to the FldB/FldC dehydratase alpha/beta subunit family.</text>
</comment>
<comment type="sequence caution" evidence="1">
    <conflict type="erroneous initiation">
        <sequence resource="EMBL-CDS" id="AAA97231"/>
    </conflict>
    <text>Extended N-terminus.</text>
</comment>
<protein>
    <recommendedName>
        <fullName>Putative dehydratase subunit YjiM</fullName>
        <ecNumber>4.-.-.-</ecNumber>
    </recommendedName>
</protein>